<name>VA0D2_HUMAN</name>
<comment type="function">
    <text evidence="1 2">Subunit of the V0 complex of vacuolar(H+)-ATPase (V-ATPase), a multisubunit enzyme composed of a peripheral complex (V1) that hydrolyzes ATP and a membrane integral complex (V0) that translocates protons. V-ATPase is responsible for acidifying and maintaining the pH of intracellular compartments and in some cell types, is targeted to the plasma membrane, where it is responsible for acidifying the extracellular environment (By similarity). May play a role in coupling of proton transport and ATP hydrolysis (By similarity). Regulator of osteoclast fusion and bone formation (By similarity).</text>
</comment>
<comment type="subunit">
    <text evidence="1 2">V-ATPase is a heteromultimeric enzyme made up of two complexes: the ATP-hydrolytic V1 complex and the proton translocation V0 complex. The V1 complex consists of three catalytic AB heterodimers that form a heterohexamer, three peripheral stalks each consisting of EG heterodimers, one central rotor including subunits D and F, and the regulatory subunits C and H. The proton translocation complex V0 consists of the proton transport subunit a, a ring of proteolipid subunits c9c'', rotary subunit d, subunits e and f, and the accessory subunits ATP6AP1/Ac45 and ATP6AP2/PRR. Interacts with TM4SF19; this interaction inhibits V1-V0 complex assembly (By similarity).</text>
</comment>
<comment type="interaction">
    <interactant intactId="EBI-3923949">
        <id>Q8N8Y2</id>
    </interactant>
    <interactant intactId="EBI-948603">
        <id>Q03989</id>
        <label>ARID5A</label>
    </interactant>
    <organismsDiffer>false</organismsDiffer>
    <experiments>3</experiments>
</comment>
<comment type="interaction">
    <interactant intactId="EBI-3923949">
        <id>Q8N8Y2</id>
    </interactant>
    <interactant intactId="EBI-10250303">
        <id>Q6IPU0</id>
        <label>CENPP</label>
    </interactant>
    <organismsDiffer>false</organismsDiffer>
    <experiments>3</experiments>
</comment>
<comment type="interaction">
    <interactant intactId="EBI-3923949">
        <id>Q8N8Y2</id>
    </interactant>
    <interactant intactId="EBI-748171">
        <id>O43186</id>
        <label>CRX</label>
    </interactant>
    <organismsDiffer>false</organismsDiffer>
    <experiments>3</experiments>
</comment>
<comment type="interaction">
    <interactant intactId="EBI-3923949">
        <id>Q8N8Y2</id>
    </interactant>
    <interactant intactId="EBI-747204">
        <id>Q9UKT9</id>
        <label>IKZF3</label>
    </interactant>
    <organismsDiffer>false</organismsDiffer>
    <experiments>3</experiments>
</comment>
<comment type="interaction">
    <interactant intactId="EBI-3923949">
        <id>Q8N8Y2</id>
    </interactant>
    <interactant intactId="EBI-6509505">
        <id>Q0VD86</id>
        <label>INCA1</label>
    </interactant>
    <organismsDiffer>false</organismsDiffer>
    <experiments>3</experiments>
</comment>
<comment type="interaction">
    <interactant intactId="EBI-3923949">
        <id>Q8N8Y2</id>
    </interactant>
    <interactant intactId="EBI-16439278">
        <id>Q6FHY5</id>
        <label>MEOX2</label>
    </interactant>
    <organismsDiffer>false</organismsDiffer>
    <experiments>3</experiments>
</comment>
<comment type="interaction">
    <interactant intactId="EBI-3923949">
        <id>Q8N8Y2</id>
    </interactant>
    <interactant intactId="EBI-13324229">
        <id>Q9BSH3</id>
        <label>NICN1</label>
    </interactant>
    <organismsDiffer>false</organismsDiffer>
    <experiments>3</experiments>
</comment>
<comment type="interaction">
    <interactant intactId="EBI-3923949">
        <id>Q8N8Y2</id>
    </interactant>
    <interactant intactId="EBI-747278">
        <id>P26367</id>
        <label>PAX6</label>
    </interactant>
    <organismsDiffer>false</organismsDiffer>
    <experiments>3</experiments>
</comment>
<comment type="interaction">
    <interactant intactId="EBI-3923949">
        <id>Q8N8Y2</id>
    </interactant>
    <interactant intactId="EBI-10293106">
        <id>Q96QT6-2</id>
        <label>PHF12</label>
    </interactant>
    <organismsDiffer>false</organismsDiffer>
    <experiments>3</experiments>
</comment>
<comment type="interaction">
    <interactant intactId="EBI-3923949">
        <id>Q8N8Y2</id>
    </interactant>
    <interactant intactId="EBI-12219503">
        <id>P01189</id>
        <label>POMC</label>
    </interactant>
    <organismsDiffer>false</organismsDiffer>
    <experiments>3</experiments>
</comment>
<comment type="interaction">
    <interactant intactId="EBI-3923949">
        <id>Q8N8Y2</id>
    </interactant>
    <interactant intactId="EBI-10829018">
        <id>Q04864-2</id>
        <label>REL</label>
    </interactant>
    <organismsDiffer>false</organismsDiffer>
    <experiments>3</experiments>
</comment>
<comment type="interaction">
    <interactant intactId="EBI-3923949">
        <id>Q8N8Y2</id>
    </interactant>
    <interactant intactId="EBI-10265323">
        <id>Q8N443</id>
        <label>RIBC1</label>
    </interactant>
    <organismsDiffer>false</organismsDiffer>
    <experiments>3</experiments>
</comment>
<comment type="interaction">
    <interactant intactId="EBI-3923949">
        <id>Q8N8Y2</id>
    </interactant>
    <interactant intactId="EBI-6257312">
        <id>Q9BVN2</id>
        <label>RUSC1</label>
    </interactant>
    <organismsDiffer>false</organismsDiffer>
    <experiments>3</experiments>
</comment>
<comment type="interaction">
    <interactant intactId="EBI-3923949">
        <id>Q8N8Y2</id>
    </interactant>
    <interactant intactId="EBI-11525407">
        <id>Q15019-3</id>
        <label>SEPTIN2</label>
    </interactant>
    <organismsDiffer>false</organismsDiffer>
    <experiments>3</experiments>
</comment>
<comment type="interaction">
    <interactant intactId="EBI-3923949">
        <id>Q8N8Y2</id>
    </interactant>
    <interactant intactId="EBI-17269964">
        <id>Q6S9Z5</id>
        <label>ZNF474</label>
    </interactant>
    <organismsDiffer>false</organismsDiffer>
    <experiments>3</experiments>
</comment>
<comment type="tissue specificity">
    <text evidence="3">Kidney, osteoclast and lung.</text>
</comment>
<comment type="similarity">
    <text evidence="4">Belongs to the V-ATPase V0D/AC39 subunit family.</text>
</comment>
<accession>Q8N8Y2</accession>
<dbReference type="EMBL" id="AY079172">
    <property type="protein sequence ID" value="AAL87000.1"/>
    <property type="molecule type" value="mRNA"/>
</dbReference>
<dbReference type="EMBL" id="AK096027">
    <property type="protein sequence ID" value="BAC04679.1"/>
    <property type="molecule type" value="mRNA"/>
</dbReference>
<dbReference type="EMBL" id="BC065207">
    <property type="protein sequence ID" value="AAH65207.1"/>
    <property type="molecule type" value="mRNA"/>
</dbReference>
<dbReference type="CCDS" id="CCDS6241.1"/>
<dbReference type="RefSeq" id="NP_689778.1">
    <property type="nucleotide sequence ID" value="NM_152565.1"/>
</dbReference>
<dbReference type="SMR" id="Q8N8Y2"/>
<dbReference type="BioGRID" id="128858">
    <property type="interactions" value="60"/>
</dbReference>
<dbReference type="ComplexPortal" id="CPX-2470">
    <property type="entry name" value="Vacuolar proton translocating ATPase complex, ATP6V0A1 variant"/>
</dbReference>
<dbReference type="ComplexPortal" id="CPX-6904">
    <property type="entry name" value="Vacuolar proton translocating ATPase complex, ATP6V0A2 variant"/>
</dbReference>
<dbReference type="ComplexPortal" id="CPX-6905">
    <property type="entry name" value="Vacuolar proton translocating ATPase complex, ATP6V0A3 variant"/>
</dbReference>
<dbReference type="ComplexPortal" id="CPX-6912">
    <property type="entry name" value="Vacuolar proton translocating ATPase complex, ATP6V0A4 variant"/>
</dbReference>
<dbReference type="FunCoup" id="Q8N8Y2">
    <property type="interactions" value="617"/>
</dbReference>
<dbReference type="IntAct" id="Q8N8Y2">
    <property type="interactions" value="31"/>
</dbReference>
<dbReference type="STRING" id="9606.ENSP00000285393"/>
<dbReference type="DrugBank" id="DB01133">
    <property type="generic name" value="Tiludronic acid"/>
</dbReference>
<dbReference type="iPTMnet" id="Q8N8Y2"/>
<dbReference type="PhosphoSitePlus" id="Q8N8Y2"/>
<dbReference type="BioMuta" id="ATP6V0D2"/>
<dbReference type="DMDM" id="74729555"/>
<dbReference type="jPOST" id="Q8N8Y2"/>
<dbReference type="MassIVE" id="Q8N8Y2"/>
<dbReference type="PaxDb" id="9606-ENSP00000285393"/>
<dbReference type="PeptideAtlas" id="Q8N8Y2"/>
<dbReference type="ProteomicsDB" id="72473"/>
<dbReference type="Pumba" id="Q8N8Y2"/>
<dbReference type="Antibodypedia" id="25450">
    <property type="antibodies" value="122 antibodies from 24 providers"/>
</dbReference>
<dbReference type="DNASU" id="245972"/>
<dbReference type="Ensembl" id="ENST00000285393.4">
    <property type="protein sequence ID" value="ENSP00000285393.3"/>
    <property type="gene ID" value="ENSG00000147614.4"/>
</dbReference>
<dbReference type="GeneID" id="245972"/>
<dbReference type="KEGG" id="hsa:245972"/>
<dbReference type="MANE-Select" id="ENST00000285393.4">
    <property type="protein sequence ID" value="ENSP00000285393.3"/>
    <property type="RefSeq nucleotide sequence ID" value="NM_152565.1"/>
    <property type="RefSeq protein sequence ID" value="NP_689778.1"/>
</dbReference>
<dbReference type="UCSC" id="uc003ydp.2">
    <property type="organism name" value="human"/>
</dbReference>
<dbReference type="AGR" id="HGNC:18266"/>
<dbReference type="CTD" id="245972"/>
<dbReference type="DisGeNET" id="245972"/>
<dbReference type="GeneCards" id="ATP6V0D2"/>
<dbReference type="HGNC" id="HGNC:18266">
    <property type="gene designation" value="ATP6V0D2"/>
</dbReference>
<dbReference type="HPA" id="ENSG00000147614">
    <property type="expression patterns" value="Tissue enriched (kidney)"/>
</dbReference>
<dbReference type="MalaCards" id="ATP6V0D2"/>
<dbReference type="MIM" id="618072">
    <property type="type" value="gene"/>
</dbReference>
<dbReference type="neXtProt" id="NX_Q8N8Y2"/>
<dbReference type="OpenTargets" id="ENSG00000147614"/>
<dbReference type="PharmGKB" id="PA38516"/>
<dbReference type="VEuPathDB" id="HostDB:ENSG00000147614"/>
<dbReference type="eggNOG" id="KOG2957">
    <property type="taxonomic scope" value="Eukaryota"/>
</dbReference>
<dbReference type="GeneTree" id="ENSGT00390000002200"/>
<dbReference type="HOGENOM" id="CLU_051277_0_0_1"/>
<dbReference type="InParanoid" id="Q8N8Y2"/>
<dbReference type="OMA" id="ETLFPTC"/>
<dbReference type="OrthoDB" id="10250083at2759"/>
<dbReference type="PAN-GO" id="Q8N8Y2">
    <property type="GO annotations" value="5 GO annotations based on evolutionary models"/>
</dbReference>
<dbReference type="PhylomeDB" id="Q8N8Y2"/>
<dbReference type="TreeFam" id="TF300857"/>
<dbReference type="BioCyc" id="MetaCyc:HS07458-MONOMER"/>
<dbReference type="PathwayCommons" id="Q8N8Y2"/>
<dbReference type="Reactome" id="R-HSA-1222556">
    <property type="pathway name" value="ROS and RNS production in phagocytes"/>
</dbReference>
<dbReference type="Reactome" id="R-HSA-77387">
    <property type="pathway name" value="Insulin receptor recycling"/>
</dbReference>
<dbReference type="Reactome" id="R-HSA-917977">
    <property type="pathway name" value="Transferrin endocytosis and recycling"/>
</dbReference>
<dbReference type="Reactome" id="R-HSA-9639288">
    <property type="pathway name" value="Amino acids regulate mTORC1"/>
</dbReference>
<dbReference type="Reactome" id="R-HSA-983712">
    <property type="pathway name" value="Ion channel transport"/>
</dbReference>
<dbReference type="SignaLink" id="Q8N8Y2"/>
<dbReference type="SIGNOR" id="Q8N8Y2"/>
<dbReference type="BioGRID-ORCS" id="245972">
    <property type="hits" value="17 hits in 1138 CRISPR screens"/>
</dbReference>
<dbReference type="ChiTaRS" id="ATP6V0D2">
    <property type="organism name" value="human"/>
</dbReference>
<dbReference type="GenomeRNAi" id="245972"/>
<dbReference type="Pharos" id="Q8N8Y2">
    <property type="development level" value="Tbio"/>
</dbReference>
<dbReference type="PRO" id="PR:Q8N8Y2"/>
<dbReference type="Proteomes" id="UP000005640">
    <property type="component" value="Chromosome 8"/>
</dbReference>
<dbReference type="RNAct" id="Q8N8Y2">
    <property type="molecule type" value="protein"/>
</dbReference>
<dbReference type="Bgee" id="ENSG00000147614">
    <property type="expression patterns" value="Expressed in adult mammalian kidney and 107 other cell types or tissues"/>
</dbReference>
<dbReference type="ExpressionAtlas" id="Q8N8Y2">
    <property type="expression patterns" value="baseline and differential"/>
</dbReference>
<dbReference type="GO" id="GO:0016324">
    <property type="term" value="C:apical plasma membrane"/>
    <property type="evidence" value="ECO:0000314"/>
    <property type="project" value="UniProtKB"/>
</dbReference>
<dbReference type="GO" id="GO:0005769">
    <property type="term" value="C:early endosome"/>
    <property type="evidence" value="ECO:0000318"/>
    <property type="project" value="GO_Central"/>
</dbReference>
<dbReference type="GO" id="GO:0010008">
    <property type="term" value="C:endosome membrane"/>
    <property type="evidence" value="ECO:0000304"/>
    <property type="project" value="Reactome"/>
</dbReference>
<dbReference type="GO" id="GO:0070062">
    <property type="term" value="C:extracellular exosome"/>
    <property type="evidence" value="ECO:0007005"/>
    <property type="project" value="UniProtKB"/>
</dbReference>
<dbReference type="GO" id="GO:0005765">
    <property type="term" value="C:lysosomal membrane"/>
    <property type="evidence" value="ECO:0000304"/>
    <property type="project" value="Reactome"/>
</dbReference>
<dbReference type="GO" id="GO:0016020">
    <property type="term" value="C:membrane"/>
    <property type="evidence" value="ECO:0000314"/>
    <property type="project" value="UniProtKB"/>
</dbReference>
<dbReference type="GO" id="GO:0030670">
    <property type="term" value="C:phagocytic vesicle membrane"/>
    <property type="evidence" value="ECO:0000304"/>
    <property type="project" value="Reactome"/>
</dbReference>
<dbReference type="GO" id="GO:0033181">
    <property type="term" value="C:plasma membrane proton-transporting V-type ATPase complex"/>
    <property type="evidence" value="ECO:0000318"/>
    <property type="project" value="GO_Central"/>
</dbReference>
<dbReference type="GO" id="GO:0033179">
    <property type="term" value="C:proton-transporting V-type ATPase, V0 domain"/>
    <property type="evidence" value="ECO:0007669"/>
    <property type="project" value="InterPro"/>
</dbReference>
<dbReference type="GO" id="GO:0016471">
    <property type="term" value="C:vacuolar proton-transporting V-type ATPase complex"/>
    <property type="evidence" value="ECO:0000314"/>
    <property type="project" value="UniProtKB"/>
</dbReference>
<dbReference type="GO" id="GO:0046961">
    <property type="term" value="F:proton-transporting ATPase activity, rotational mechanism"/>
    <property type="evidence" value="ECO:0007669"/>
    <property type="project" value="InterPro"/>
</dbReference>
<dbReference type="GO" id="GO:0016241">
    <property type="term" value="P:regulation of macroautophagy"/>
    <property type="evidence" value="ECO:0000303"/>
    <property type="project" value="ParkinsonsUK-UCL"/>
</dbReference>
<dbReference type="GO" id="GO:0007035">
    <property type="term" value="P:vacuolar acidification"/>
    <property type="evidence" value="ECO:0000318"/>
    <property type="project" value="GO_Central"/>
</dbReference>
<dbReference type="GO" id="GO:0007034">
    <property type="term" value="P:vacuolar transport"/>
    <property type="evidence" value="ECO:0000318"/>
    <property type="project" value="GO_Central"/>
</dbReference>
<dbReference type="FunFam" id="1.20.1690.10:FF:000001">
    <property type="entry name" value="V-type proton ATPase subunit"/>
    <property type="match status" value="1"/>
</dbReference>
<dbReference type="FunFam" id="1.20.1690.10:FF:000003">
    <property type="entry name" value="V-type proton ATPase subunit"/>
    <property type="match status" value="1"/>
</dbReference>
<dbReference type="Gene3D" id="1.10.132.50">
    <property type="entry name" value="ATP synthase (C/AC39) subunit, domain 3"/>
    <property type="match status" value="1"/>
</dbReference>
<dbReference type="Gene3D" id="1.20.1690.10">
    <property type="entry name" value="V-type ATP synthase subunit C domain"/>
    <property type="match status" value="2"/>
</dbReference>
<dbReference type="InterPro" id="IPR036079">
    <property type="entry name" value="ATPase_csu/dsu_sf"/>
</dbReference>
<dbReference type="InterPro" id="IPR002843">
    <property type="entry name" value="ATPase_V0-cplx_csu/dsu"/>
</dbReference>
<dbReference type="InterPro" id="IPR016727">
    <property type="entry name" value="ATPase_V0-cplx_dsu"/>
</dbReference>
<dbReference type="InterPro" id="IPR035067">
    <property type="entry name" value="V-type_ATPase_csu/dsu"/>
</dbReference>
<dbReference type="InterPro" id="IPR044911">
    <property type="entry name" value="V-type_ATPase_csu/dsu_dom_3"/>
</dbReference>
<dbReference type="PANTHER" id="PTHR11028">
    <property type="entry name" value="VACUOLAR ATP SYNTHASE SUBUNIT AC39"/>
    <property type="match status" value="1"/>
</dbReference>
<dbReference type="Pfam" id="PF01992">
    <property type="entry name" value="vATP-synt_AC39"/>
    <property type="match status" value="1"/>
</dbReference>
<dbReference type="PIRSF" id="PIRSF018497">
    <property type="entry name" value="V-ATP_synth_D"/>
    <property type="match status" value="1"/>
</dbReference>
<dbReference type="SUPFAM" id="SSF103486">
    <property type="entry name" value="V-type ATP synthase subunit C"/>
    <property type="match status" value="1"/>
</dbReference>
<proteinExistence type="evidence at protein level"/>
<organism>
    <name type="scientific">Homo sapiens</name>
    <name type="common">Human</name>
    <dbReference type="NCBI Taxonomy" id="9606"/>
    <lineage>
        <taxon>Eukaryota</taxon>
        <taxon>Metazoa</taxon>
        <taxon>Chordata</taxon>
        <taxon>Craniata</taxon>
        <taxon>Vertebrata</taxon>
        <taxon>Euteleostomi</taxon>
        <taxon>Mammalia</taxon>
        <taxon>Eutheria</taxon>
        <taxon>Euarchontoglires</taxon>
        <taxon>Primates</taxon>
        <taxon>Haplorrhini</taxon>
        <taxon>Catarrhini</taxon>
        <taxon>Hominidae</taxon>
        <taxon>Homo</taxon>
    </lineage>
</organism>
<protein>
    <recommendedName>
        <fullName>V-type proton ATPase subunit d 2</fullName>
        <shortName>V-ATPase subunit d 2</shortName>
    </recommendedName>
    <alternativeName>
        <fullName>Vacuolar proton pump subunit d 2</fullName>
    </alternativeName>
</protein>
<feature type="chain" id="PRO_0000285657" description="V-type proton ATPase subunit d 2">
    <location>
        <begin position="1"/>
        <end position="350"/>
    </location>
</feature>
<feature type="sequence variant" id="VAR_032039" description="In dbSNP:rs10094744.">
    <original>G</original>
    <variation>R</variation>
    <location>
        <position position="272"/>
    </location>
</feature>
<feature type="sequence variant" id="VAR_032040" description="In dbSNP:rs4263741.">
    <original>E</original>
    <variation>K</variation>
    <location>
        <position position="295"/>
    </location>
</feature>
<evidence type="ECO:0000250" key="1">
    <source>
        <dbReference type="UniProtKB" id="P61421"/>
    </source>
</evidence>
<evidence type="ECO:0000250" key="2">
    <source>
        <dbReference type="UniProtKB" id="Q80SY3"/>
    </source>
</evidence>
<evidence type="ECO:0000269" key="3">
    <source>
    </source>
</evidence>
<evidence type="ECO:0000305" key="4"/>
<reference key="1">
    <citation type="journal article" date="2002" name="Gene">
        <title>Molecular cloning and characterization of novel tissue-specific isoforms of the human vacuolar H(+)-ATPase C, G and d subunits, and their evaluation in autosomal recessive distal renal tubular acidosis.</title>
        <authorList>
            <person name="Smith A.N."/>
            <person name="Borthwick K.J."/>
            <person name="Karet F.E."/>
        </authorList>
    </citation>
    <scope>NUCLEOTIDE SEQUENCE [MRNA]</scope>
    <scope>TISSUE SPECIFICITY</scope>
</reference>
<reference key="2">
    <citation type="journal article" date="2004" name="Nat. Genet.">
        <title>Complete sequencing and characterization of 21,243 full-length human cDNAs.</title>
        <authorList>
            <person name="Ota T."/>
            <person name="Suzuki Y."/>
            <person name="Nishikawa T."/>
            <person name="Otsuki T."/>
            <person name="Sugiyama T."/>
            <person name="Irie R."/>
            <person name="Wakamatsu A."/>
            <person name="Hayashi K."/>
            <person name="Sato H."/>
            <person name="Nagai K."/>
            <person name="Kimura K."/>
            <person name="Makita H."/>
            <person name="Sekine M."/>
            <person name="Obayashi M."/>
            <person name="Nishi T."/>
            <person name="Shibahara T."/>
            <person name="Tanaka T."/>
            <person name="Ishii S."/>
            <person name="Yamamoto J."/>
            <person name="Saito K."/>
            <person name="Kawai Y."/>
            <person name="Isono Y."/>
            <person name="Nakamura Y."/>
            <person name="Nagahari K."/>
            <person name="Murakami K."/>
            <person name="Yasuda T."/>
            <person name="Iwayanagi T."/>
            <person name="Wagatsuma M."/>
            <person name="Shiratori A."/>
            <person name="Sudo H."/>
            <person name="Hosoiri T."/>
            <person name="Kaku Y."/>
            <person name="Kodaira H."/>
            <person name="Kondo H."/>
            <person name="Sugawara M."/>
            <person name="Takahashi M."/>
            <person name="Kanda K."/>
            <person name="Yokoi T."/>
            <person name="Furuya T."/>
            <person name="Kikkawa E."/>
            <person name="Omura Y."/>
            <person name="Abe K."/>
            <person name="Kamihara K."/>
            <person name="Katsuta N."/>
            <person name="Sato K."/>
            <person name="Tanikawa M."/>
            <person name="Yamazaki M."/>
            <person name="Ninomiya K."/>
            <person name="Ishibashi T."/>
            <person name="Yamashita H."/>
            <person name="Murakawa K."/>
            <person name="Fujimori K."/>
            <person name="Tanai H."/>
            <person name="Kimata M."/>
            <person name="Watanabe M."/>
            <person name="Hiraoka S."/>
            <person name="Chiba Y."/>
            <person name="Ishida S."/>
            <person name="Ono Y."/>
            <person name="Takiguchi S."/>
            <person name="Watanabe S."/>
            <person name="Yosida M."/>
            <person name="Hotuta T."/>
            <person name="Kusano J."/>
            <person name="Kanehori K."/>
            <person name="Takahashi-Fujii A."/>
            <person name="Hara H."/>
            <person name="Tanase T.-O."/>
            <person name="Nomura Y."/>
            <person name="Togiya S."/>
            <person name="Komai F."/>
            <person name="Hara R."/>
            <person name="Takeuchi K."/>
            <person name="Arita M."/>
            <person name="Imose N."/>
            <person name="Musashino K."/>
            <person name="Yuuki H."/>
            <person name="Oshima A."/>
            <person name="Sasaki N."/>
            <person name="Aotsuka S."/>
            <person name="Yoshikawa Y."/>
            <person name="Matsunawa H."/>
            <person name="Ichihara T."/>
            <person name="Shiohata N."/>
            <person name="Sano S."/>
            <person name="Moriya S."/>
            <person name="Momiyama H."/>
            <person name="Satoh N."/>
            <person name="Takami S."/>
            <person name="Terashima Y."/>
            <person name="Suzuki O."/>
            <person name="Nakagawa S."/>
            <person name="Senoh A."/>
            <person name="Mizoguchi H."/>
            <person name="Goto Y."/>
            <person name="Shimizu F."/>
            <person name="Wakebe H."/>
            <person name="Hishigaki H."/>
            <person name="Watanabe T."/>
            <person name="Sugiyama A."/>
            <person name="Takemoto M."/>
            <person name="Kawakami B."/>
            <person name="Yamazaki M."/>
            <person name="Watanabe K."/>
            <person name="Kumagai A."/>
            <person name="Itakura S."/>
            <person name="Fukuzumi Y."/>
            <person name="Fujimori Y."/>
            <person name="Komiyama M."/>
            <person name="Tashiro H."/>
            <person name="Tanigami A."/>
            <person name="Fujiwara T."/>
            <person name="Ono T."/>
            <person name="Yamada K."/>
            <person name="Fujii Y."/>
            <person name="Ozaki K."/>
            <person name="Hirao M."/>
            <person name="Ohmori Y."/>
            <person name="Kawabata A."/>
            <person name="Hikiji T."/>
            <person name="Kobatake N."/>
            <person name="Inagaki H."/>
            <person name="Ikema Y."/>
            <person name="Okamoto S."/>
            <person name="Okitani R."/>
            <person name="Kawakami T."/>
            <person name="Noguchi S."/>
            <person name="Itoh T."/>
            <person name="Shigeta K."/>
            <person name="Senba T."/>
            <person name="Matsumura K."/>
            <person name="Nakajima Y."/>
            <person name="Mizuno T."/>
            <person name="Morinaga M."/>
            <person name="Sasaki M."/>
            <person name="Togashi T."/>
            <person name="Oyama M."/>
            <person name="Hata H."/>
            <person name="Watanabe M."/>
            <person name="Komatsu T."/>
            <person name="Mizushima-Sugano J."/>
            <person name="Satoh T."/>
            <person name="Shirai Y."/>
            <person name="Takahashi Y."/>
            <person name="Nakagawa K."/>
            <person name="Okumura K."/>
            <person name="Nagase T."/>
            <person name="Nomura N."/>
            <person name="Kikuchi H."/>
            <person name="Masuho Y."/>
            <person name="Yamashita R."/>
            <person name="Nakai K."/>
            <person name="Yada T."/>
            <person name="Nakamura Y."/>
            <person name="Ohara O."/>
            <person name="Isogai T."/>
            <person name="Sugano S."/>
        </authorList>
    </citation>
    <scope>NUCLEOTIDE SEQUENCE [LARGE SCALE MRNA]</scope>
    <source>
        <tissue>Kidney</tissue>
    </source>
</reference>
<reference key="3">
    <citation type="journal article" date="2004" name="Genome Res.">
        <title>The status, quality, and expansion of the NIH full-length cDNA project: the Mammalian Gene Collection (MGC).</title>
        <authorList>
            <consortium name="The MGC Project Team"/>
        </authorList>
    </citation>
    <scope>NUCLEOTIDE SEQUENCE [LARGE SCALE MRNA]</scope>
    <source>
        <tissue>Colon</tissue>
    </source>
</reference>
<keyword id="KW-0375">Hydrogen ion transport</keyword>
<keyword id="KW-0406">Ion transport</keyword>
<keyword id="KW-1267">Proteomics identification</keyword>
<keyword id="KW-1185">Reference proteome</keyword>
<keyword id="KW-0813">Transport</keyword>
<gene>
    <name type="primary">ATP6V0D2</name>
</gene>
<sequence length="350" mass="40426">MLEGAELYFNVDHGYLEGLVRGCKASLLTQQDYINLVQCETLEDLKIHLQTTDYGNFLANHTNPLTVSKIDTEMRKRLCGEFEYFRNHSLEPLSTFLTYMTCSYMIDNVILLMNGALQKKSVKEILGKCHPLGRFTEMEAVNIAETPSDLFNAILIETPLAPFFQDCMSENALDELNIELLRNKLYKSYLEAFYKFCKNHGDVTAEVMCPILEFEADRRAFIITLNSFGTELSKEDRETLYPTFGKLYPEGLRLLAQAEDFDQMKNVADHYGVYKPLFEAVGGSGGKTLEDVFYEREVQMNVLAFNRQFHYGVFYAYVKLKEQEIRNIVWIAECISQRHRTKINSYIPIL</sequence>